<protein>
    <recommendedName>
        <fullName>Body wall hemoglobin</fullName>
    </recommendedName>
</protein>
<dbReference type="EMBL" id="AF033002">
    <property type="protein sequence ID" value="AAC39126.1"/>
    <property type="molecule type" value="Genomic_DNA"/>
</dbReference>
<dbReference type="SMR" id="O76243"/>
<dbReference type="GO" id="GO:0020037">
    <property type="term" value="F:heme binding"/>
    <property type="evidence" value="ECO:0007669"/>
    <property type="project" value="InterPro"/>
</dbReference>
<dbReference type="GO" id="GO:0046872">
    <property type="term" value="F:metal ion binding"/>
    <property type="evidence" value="ECO:0007669"/>
    <property type="project" value="UniProtKB-KW"/>
</dbReference>
<dbReference type="GO" id="GO:0019825">
    <property type="term" value="F:oxygen binding"/>
    <property type="evidence" value="ECO:0007669"/>
    <property type="project" value="InterPro"/>
</dbReference>
<dbReference type="GO" id="GO:0005344">
    <property type="term" value="F:oxygen carrier activity"/>
    <property type="evidence" value="ECO:0007669"/>
    <property type="project" value="UniProtKB-KW"/>
</dbReference>
<dbReference type="CDD" id="cd01040">
    <property type="entry name" value="Mb-like"/>
    <property type="match status" value="1"/>
</dbReference>
<dbReference type="Gene3D" id="1.10.490.10">
    <property type="entry name" value="Globins"/>
    <property type="match status" value="1"/>
</dbReference>
<dbReference type="InterPro" id="IPR000971">
    <property type="entry name" value="Globin"/>
</dbReference>
<dbReference type="InterPro" id="IPR009050">
    <property type="entry name" value="Globin-like_sf"/>
</dbReference>
<dbReference type="InterPro" id="IPR012292">
    <property type="entry name" value="Globin/Proto"/>
</dbReference>
<dbReference type="InterPro" id="IPR044399">
    <property type="entry name" value="Mb-like_M"/>
</dbReference>
<dbReference type="Pfam" id="PF00042">
    <property type="entry name" value="Globin"/>
    <property type="match status" value="1"/>
</dbReference>
<dbReference type="SUPFAM" id="SSF46458">
    <property type="entry name" value="Globin-like"/>
    <property type="match status" value="1"/>
</dbReference>
<dbReference type="PROSITE" id="PS01033">
    <property type="entry name" value="GLOBIN"/>
    <property type="match status" value="1"/>
</dbReference>
<accession>O76243</accession>
<sequence length="110" mass="11356">MVNWAAVVDAFYVELFTAHPQYQDRFAFKGVALGDLKGNAAYQTQASKTVDYITAALAGSADAAGLASRHVGRNVGAPEFTHAKACLAKACAANGAPDLGGAVDAIISHF</sequence>
<evidence type="ECO:0000250" key="1"/>
<evidence type="ECO:0000255" key="2">
    <source>
        <dbReference type="PROSITE-ProRule" id="PRU00238"/>
    </source>
</evidence>
<evidence type="ECO:0000269" key="3">
    <source>
    </source>
</evidence>
<evidence type="ECO:0000305" key="4"/>
<feature type="initiator methionine" description="Removed" evidence="3">
    <location>
        <position position="1"/>
    </location>
</feature>
<feature type="chain" id="PRO_0000052498" description="Body wall hemoglobin">
    <location>
        <begin position="2"/>
        <end position="110"/>
    </location>
</feature>
<feature type="domain" description="Globin" evidence="2">
    <location>
        <begin position="2"/>
        <end position="110"/>
    </location>
</feature>
<feature type="binding site" description="proximal binding residue" evidence="1">
    <location>
        <position position="70"/>
    </location>
    <ligand>
        <name>heme</name>
        <dbReference type="ChEBI" id="CHEBI:30413"/>
    </ligand>
    <ligandPart>
        <name>Fe</name>
        <dbReference type="ChEBI" id="CHEBI:18248"/>
    </ligandPart>
</feature>
<reference key="1">
    <citation type="journal article" date="1998" name="J. Biol. Chem.">
        <title>The mini-hemoglobins in neural and body wall tissue of the nemertean worm, Cerebratulus lacteus.</title>
        <authorList>
            <person name="Vandergon T.L."/>
            <person name="Riggs C.K."/>
            <person name="Gorr T.A."/>
            <person name="Colacino J.M."/>
            <person name="Riggs A.F."/>
        </authorList>
    </citation>
    <scope>NUCLEOTIDE SEQUENCE [GENOMIC DNA]</scope>
    <scope>PROTEIN SEQUENCE OF 2-46</scope>
    <source>
        <tissue>Body wall</tissue>
    </source>
</reference>
<comment type="subunit">
    <text evidence="1">Homotetramer.</text>
</comment>
<comment type="similarity">
    <text evidence="4">Belongs to the globin family.</text>
</comment>
<proteinExistence type="evidence at protein level"/>
<keyword id="KW-0903">Direct protein sequencing</keyword>
<keyword id="KW-0349">Heme</keyword>
<keyword id="KW-0408">Iron</keyword>
<keyword id="KW-0479">Metal-binding</keyword>
<keyword id="KW-0561">Oxygen transport</keyword>
<keyword id="KW-0813">Transport</keyword>
<name>GLBB_CERLA</name>
<organism>
    <name type="scientific">Cerebratulus lacteus</name>
    <name type="common">Milky ribbon worm</name>
    <name type="synonym">Micrura lactea</name>
    <dbReference type="NCBI Taxonomy" id="6221"/>
    <lineage>
        <taxon>Eukaryota</taxon>
        <taxon>Metazoa</taxon>
        <taxon>Spiralia</taxon>
        <taxon>Lophotrochozoa</taxon>
        <taxon>Nemertea</taxon>
        <taxon>Pilidiophora</taxon>
        <taxon>Heteronemertea</taxon>
        <taxon>Lineidae</taxon>
        <taxon>Cerebratulus</taxon>
    </lineage>
</organism>